<accession>Q8H1X1</accession>
<accession>A2XQB6</accession>
<name>ETR2_ORYSI</name>
<comment type="function">
    <text evidence="2">Ethylene receptor related to bacterial two-component regulators. Acts as a negative regulator of ethylene signaling. May delay the transition from the vegetative stage to the floral stage by up-regulating GI (GIGANTEA) and RCN1 and cause starch accumulation in stems by down-regulating the alpha-amylase AMY3D.</text>
</comment>
<comment type="catalytic activity">
    <reaction evidence="10">
        <text>ATP + protein L-histidine = ADP + protein N-phospho-L-histidine.</text>
        <dbReference type="EC" id="2.7.13.3"/>
    </reaction>
</comment>
<comment type="cofactor">
    <cofactor evidence="1">
        <name>Cu cation</name>
        <dbReference type="ChEBI" id="CHEBI:23378"/>
    </cofactor>
    <text evidence="1">Binds 1 copper ion per dimer.</text>
</comment>
<comment type="subcellular location">
    <subcellularLocation>
        <location evidence="1">Endoplasmic reticulum membrane</location>
        <topology evidence="3">Multi-pass membrane protein</topology>
    </subcellularLocation>
</comment>
<comment type="tissue specificity">
    <text evidence="6">Expressed in anthers and hulls.</text>
</comment>
<comment type="induction">
    <text evidence="6 7">By ethylene and auxin (PubMed:14754915). Induced by submergence, ethylene and gibberellin (PubMed:15020633).</text>
</comment>
<comment type="similarity">
    <text evidence="10">Belongs to the ethylene receptor family.</text>
</comment>
<comment type="sequence caution" evidence="10">
    <conflict type="erroneous gene model prediction">
        <sequence resource="EMBL-CDS" id="EAY93026"/>
    </conflict>
</comment>
<proteinExistence type="evidence at transcript level"/>
<organism>
    <name type="scientific">Oryza sativa subsp. indica</name>
    <name type="common">Rice</name>
    <dbReference type="NCBI Taxonomy" id="39946"/>
    <lineage>
        <taxon>Eukaryota</taxon>
        <taxon>Viridiplantae</taxon>
        <taxon>Streptophyta</taxon>
        <taxon>Embryophyta</taxon>
        <taxon>Tracheophyta</taxon>
        <taxon>Spermatophyta</taxon>
        <taxon>Magnoliopsida</taxon>
        <taxon>Liliopsida</taxon>
        <taxon>Poales</taxon>
        <taxon>Poaceae</taxon>
        <taxon>BOP clade</taxon>
        <taxon>Oryzoideae</taxon>
        <taxon>Oryzeae</taxon>
        <taxon>Oryzinae</taxon>
        <taxon>Oryza</taxon>
        <taxon>Oryza sativa</taxon>
    </lineage>
</organism>
<keyword id="KW-0067">ATP-binding</keyword>
<keyword id="KW-0186">Copper</keyword>
<keyword id="KW-1015">Disulfide bond</keyword>
<keyword id="KW-0256">Endoplasmic reticulum</keyword>
<keyword id="KW-0936">Ethylene signaling pathway</keyword>
<keyword id="KW-0418">Kinase</keyword>
<keyword id="KW-0472">Membrane</keyword>
<keyword id="KW-0479">Metal-binding</keyword>
<keyword id="KW-0547">Nucleotide-binding</keyword>
<keyword id="KW-0597">Phosphoprotein</keyword>
<keyword id="KW-0675">Receptor</keyword>
<keyword id="KW-1185">Reference proteome</keyword>
<keyword id="KW-0808">Transferase</keyword>
<keyword id="KW-0812">Transmembrane</keyword>
<keyword id="KW-1133">Transmembrane helix</keyword>
<keyword id="KW-0902">Two-component regulatory system</keyword>
<gene>
    <name evidence="11" type="primary">ETR2</name>
</gene>
<protein>
    <recommendedName>
        <fullName evidence="10">Ethylene receptor 2</fullName>
        <shortName evidence="8">OS-ETR2</shortName>
        <ecNumber evidence="10">2.7.13.3</ecNumber>
    </recommendedName>
    <alternativeName>
        <fullName evidence="11">OsETRL1</fullName>
    </alternativeName>
    <alternativeName>
        <fullName evidence="9">Protein ETYLENE RESPONSE 2-LIKE 1</fullName>
        <shortName evidence="9">Os-ERL1</shortName>
    </alternativeName>
</protein>
<evidence type="ECO:0000250" key="1">
    <source>
        <dbReference type="UniProtKB" id="P49333"/>
    </source>
</evidence>
<evidence type="ECO:0000250" key="2">
    <source>
        <dbReference type="UniProtKB" id="Q7XX84"/>
    </source>
</evidence>
<evidence type="ECO:0000255" key="3"/>
<evidence type="ECO:0000255" key="4">
    <source>
        <dbReference type="PROSITE-ProRule" id="PRU00107"/>
    </source>
</evidence>
<evidence type="ECO:0000255" key="5">
    <source>
        <dbReference type="PROSITE-ProRule" id="PRU00169"/>
    </source>
</evidence>
<evidence type="ECO:0000269" key="6">
    <source>
    </source>
</evidence>
<evidence type="ECO:0000269" key="7">
    <source>
    </source>
</evidence>
<evidence type="ECO:0000303" key="8">
    <source>
    </source>
</evidence>
<evidence type="ECO:0000303" key="9">
    <source>
    </source>
</evidence>
<evidence type="ECO:0000305" key="10"/>
<evidence type="ECO:0000312" key="11">
    <source>
        <dbReference type="EMBL" id="AAN15203.2"/>
    </source>
</evidence>
<sequence>MPPIPSLWIRVFFSWLLLSLPAAAAADFSHCGGCDDGDGGGGIWSTDNILQCQRVSDFLIAMAYFSIPLELLYFATCSDLFPLKWIVLQFGAFIVLCGLTHLITMFTYEPHSFHVVLALTVAKFLTALVSFATAITLLTLIPQLLRVKVRENFLRIKARELDREVGMMKRQEEASWHVRMLTHEIRKSLDRHTILYTTMVELSKTLELQNCAVWMPSESGSEMILTHQLRQMETEDSNSLSIAMDNPDVLEIKATKDAKVLAADSALGIASRGKLEAGPVAAIRMPMLKASNFKGGTPEVMETSYAILVLVLPEDGSLGWGEEELEIVEVVADQVAVALSHAAVLEESQLIREKLAAQHRDLLRAKHETTMATEARNSFQTAMYDGMRRPMHSILGLVSMMQQENMNPEQRLVMDAIVKTSSVASTLMNDVMQTSTVNREYLSLVRRAFNLHLLVKEAISVVRCLTGCKGIDFEFEVDNSLPERVVGDEKRVFHIVLHMVGTLIQRCNAGCLSLYVNTYNEKEERHNQDWMLRRANFSGSYVCVKFEIRIRESRGNLLSSSSSRRLQGPNSTSSEMGLSFNMCKKIVQMMNGNIWSVSDSKGLGETIMLALQFQLQHVTPVSGASSDLFRSAPIPNFNGLQVILVDSDDTNRAVTHKLLEKLGCLVLSVTSGIQCINSFASAESSFQLVVLDLTMRTMDGFDVALAIRKFRGNCWPPLIVALAASTDDTVRDRCQQAGINGLIQKPVTLAALGDELYRVLQNN</sequence>
<feature type="chain" id="PRO_0000433866" description="Ethylene receptor 2">
    <location>
        <begin position="1"/>
        <end position="763"/>
    </location>
</feature>
<feature type="transmembrane region" description="Helical" evidence="3">
    <location>
        <begin position="58"/>
        <end position="78"/>
    </location>
</feature>
<feature type="transmembrane region" description="Helical" evidence="3">
    <location>
        <begin position="86"/>
        <end position="106"/>
    </location>
</feature>
<feature type="transmembrane region" description="Helical" evidence="3">
    <location>
        <begin position="115"/>
        <end position="135"/>
    </location>
</feature>
<feature type="domain" description="GAF" evidence="10">
    <location>
        <begin position="190"/>
        <end position="339"/>
    </location>
</feature>
<feature type="domain" description="Histidine kinase" evidence="4">
    <location>
        <begin position="382"/>
        <end position="615"/>
    </location>
</feature>
<feature type="domain" description="Response regulatory" evidence="5">
    <location>
        <begin position="641"/>
        <end position="760"/>
    </location>
</feature>
<feature type="binding site" evidence="1">
    <location>
        <position position="97"/>
    </location>
    <ligand>
        <name>Cu cation</name>
        <dbReference type="ChEBI" id="CHEBI:23378"/>
    </ligand>
</feature>
<feature type="binding site" evidence="1">
    <location>
        <position position="101"/>
    </location>
    <ligand>
        <name>Cu cation</name>
        <dbReference type="ChEBI" id="CHEBI:23378"/>
    </ligand>
</feature>
<feature type="modified residue" description="4-aspartylphosphate" evidence="5">
    <location>
        <position position="692"/>
    </location>
</feature>
<feature type="disulfide bond" description="Interchain" evidence="1">
    <location>
        <position position="31"/>
    </location>
</feature>
<feature type="disulfide bond" description="Interchain" evidence="1">
    <location>
        <position position="34"/>
    </location>
</feature>
<feature type="sequence conflict" description="In Ref. 2; BAF51961 and 1; AAN15203." ref="2 1">
    <original>I</original>
    <variation>M</variation>
    <location>
        <position position="351"/>
    </location>
</feature>
<feature type="sequence conflict" description="In Ref. 2; BAF51961 and 1; AAN15203." ref="2 1">
    <original>L</original>
    <variation>S</variation>
    <location>
        <position position="453"/>
    </location>
</feature>
<dbReference type="EC" id="2.7.13.3" evidence="10"/>
<dbReference type="EMBL" id="AY136816">
    <property type="protein sequence ID" value="AAN15203.2"/>
    <property type="molecule type" value="mRNA"/>
</dbReference>
<dbReference type="EMBL" id="AB107219">
    <property type="protein sequence ID" value="BAF51961.1"/>
    <property type="molecule type" value="mRNA"/>
</dbReference>
<dbReference type="EMBL" id="CM000129">
    <property type="protein sequence ID" value="EAY93026.1"/>
    <property type="status" value="ALT_SEQ"/>
    <property type="molecule type" value="Genomic_DNA"/>
</dbReference>
<dbReference type="SMR" id="Q8H1X1"/>
<dbReference type="STRING" id="39946.Q8H1X1"/>
<dbReference type="EnsemblPlants" id="OsGoSa_04g0002750.01">
    <property type="protein sequence ID" value="OsGoSa_04g0002750.01"/>
    <property type="gene ID" value="OsGoSa_04g0002750"/>
</dbReference>
<dbReference type="EnsemblPlants" id="OsLaMu_04g0002670.01">
    <property type="protein sequence ID" value="OsLaMu_04g0002670.01"/>
    <property type="gene ID" value="OsLaMu_04g0002670"/>
</dbReference>
<dbReference type="EnsemblPlants" id="OsLima_04g0002670.01">
    <property type="protein sequence ID" value="OsLima_04g0002670.01"/>
    <property type="gene ID" value="OsLima_04g0002670"/>
</dbReference>
<dbReference type="EnsemblPlants" id="OsLiXu_04g0002580.01">
    <property type="protein sequence ID" value="OsLiXu_04g0002580.01"/>
    <property type="gene ID" value="OsLiXu_04g0002580"/>
</dbReference>
<dbReference type="EnsemblPlants" id="OsPr106_04g0002720.01">
    <property type="protein sequence ID" value="OsPr106_04g0002720.01"/>
    <property type="gene ID" value="OsPr106_04g0002720"/>
</dbReference>
<dbReference type="Gramene" id="OsGoSa_04g0002750.01">
    <property type="protein sequence ID" value="OsGoSa_04g0002750.01"/>
    <property type="gene ID" value="OsGoSa_04g0002750"/>
</dbReference>
<dbReference type="Gramene" id="OsLaMu_04g0002670.01">
    <property type="protein sequence ID" value="OsLaMu_04g0002670.01"/>
    <property type="gene ID" value="OsLaMu_04g0002670"/>
</dbReference>
<dbReference type="Gramene" id="OsLima_04g0002670.01">
    <property type="protein sequence ID" value="OsLima_04g0002670.01"/>
    <property type="gene ID" value="OsLima_04g0002670"/>
</dbReference>
<dbReference type="Gramene" id="OsLiXu_04g0002580.01">
    <property type="protein sequence ID" value="OsLiXu_04g0002580.01"/>
    <property type="gene ID" value="OsLiXu_04g0002580"/>
</dbReference>
<dbReference type="Gramene" id="OsPr106_04g0002720.01">
    <property type="protein sequence ID" value="OsPr106_04g0002720.01"/>
    <property type="gene ID" value="OsPr106_04g0002720"/>
</dbReference>
<dbReference type="OrthoDB" id="60033at2759"/>
<dbReference type="Proteomes" id="UP000007015">
    <property type="component" value="Chromosome 4"/>
</dbReference>
<dbReference type="GO" id="GO:0005789">
    <property type="term" value="C:endoplasmic reticulum membrane"/>
    <property type="evidence" value="ECO:0007669"/>
    <property type="project" value="UniProtKB-SubCell"/>
</dbReference>
<dbReference type="GO" id="GO:0005524">
    <property type="term" value="F:ATP binding"/>
    <property type="evidence" value="ECO:0007669"/>
    <property type="project" value="UniProtKB-KW"/>
</dbReference>
<dbReference type="GO" id="GO:0051740">
    <property type="term" value="F:ethylene binding"/>
    <property type="evidence" value="ECO:0007669"/>
    <property type="project" value="InterPro"/>
</dbReference>
<dbReference type="GO" id="GO:0038199">
    <property type="term" value="F:ethylene receptor activity"/>
    <property type="evidence" value="ECO:0007669"/>
    <property type="project" value="InterPro"/>
</dbReference>
<dbReference type="GO" id="GO:0046872">
    <property type="term" value="F:metal ion binding"/>
    <property type="evidence" value="ECO:0007669"/>
    <property type="project" value="UniProtKB-KW"/>
</dbReference>
<dbReference type="GO" id="GO:0004673">
    <property type="term" value="F:protein histidine kinase activity"/>
    <property type="evidence" value="ECO:0007669"/>
    <property type="project" value="UniProtKB-EC"/>
</dbReference>
<dbReference type="CDD" id="cd16938">
    <property type="entry name" value="HATPase_ETR2_ERS2-EIN4-like"/>
    <property type="match status" value="1"/>
</dbReference>
<dbReference type="CDD" id="cd19933">
    <property type="entry name" value="REC_ETR-like"/>
    <property type="match status" value="1"/>
</dbReference>
<dbReference type="FunFam" id="3.30.565.10:FF:000094">
    <property type="entry name" value="Ethylene receptor"/>
    <property type="match status" value="1"/>
</dbReference>
<dbReference type="FunFam" id="3.40.50.2300:FF:000240">
    <property type="entry name" value="Ethylene receptor"/>
    <property type="match status" value="1"/>
</dbReference>
<dbReference type="FunFam" id="1.10.287.130:FF:000087">
    <property type="entry name" value="Ethylene receptor 4"/>
    <property type="match status" value="1"/>
</dbReference>
<dbReference type="Gene3D" id="1.10.287.130">
    <property type="match status" value="1"/>
</dbReference>
<dbReference type="Gene3D" id="3.30.450.40">
    <property type="match status" value="1"/>
</dbReference>
<dbReference type="Gene3D" id="3.40.50.2300">
    <property type="match status" value="1"/>
</dbReference>
<dbReference type="Gene3D" id="3.30.565.10">
    <property type="entry name" value="Histidine kinase-like ATPase, C-terminal domain"/>
    <property type="match status" value="1"/>
</dbReference>
<dbReference type="InterPro" id="IPR011006">
    <property type="entry name" value="CheY-like_superfamily"/>
</dbReference>
<dbReference type="InterPro" id="IPR014525">
    <property type="entry name" value="ETR"/>
</dbReference>
<dbReference type="InterPro" id="IPR003018">
    <property type="entry name" value="GAF"/>
</dbReference>
<dbReference type="InterPro" id="IPR029016">
    <property type="entry name" value="GAF-like_dom_sf"/>
</dbReference>
<dbReference type="InterPro" id="IPR036890">
    <property type="entry name" value="HATPase_C_sf"/>
</dbReference>
<dbReference type="InterPro" id="IPR005467">
    <property type="entry name" value="His_kinase_dom"/>
</dbReference>
<dbReference type="InterPro" id="IPR001789">
    <property type="entry name" value="Sig_transdc_resp-reg_receiver"/>
</dbReference>
<dbReference type="PANTHER" id="PTHR24423:SF633">
    <property type="entry name" value="ETHYLENE RECEPTOR 2"/>
    <property type="match status" value="1"/>
</dbReference>
<dbReference type="PANTHER" id="PTHR24423">
    <property type="entry name" value="TWO-COMPONENT SENSOR HISTIDINE KINASE"/>
    <property type="match status" value="1"/>
</dbReference>
<dbReference type="Pfam" id="PF25487">
    <property type="entry name" value="ETR1_N"/>
    <property type="match status" value="1"/>
</dbReference>
<dbReference type="Pfam" id="PF01590">
    <property type="entry name" value="GAF"/>
    <property type="match status" value="1"/>
</dbReference>
<dbReference type="Pfam" id="PF00072">
    <property type="entry name" value="Response_reg"/>
    <property type="match status" value="1"/>
</dbReference>
<dbReference type="PIRSF" id="PIRSF026389">
    <property type="entry name" value="Ethyln_sen_HK"/>
    <property type="match status" value="1"/>
</dbReference>
<dbReference type="SMART" id="SM00065">
    <property type="entry name" value="GAF"/>
    <property type="match status" value="1"/>
</dbReference>
<dbReference type="SMART" id="SM00448">
    <property type="entry name" value="REC"/>
    <property type="match status" value="1"/>
</dbReference>
<dbReference type="SUPFAM" id="SSF55874">
    <property type="entry name" value="ATPase domain of HSP90 chaperone/DNA topoisomerase II/histidine kinase"/>
    <property type="match status" value="1"/>
</dbReference>
<dbReference type="SUPFAM" id="SSF52172">
    <property type="entry name" value="CheY-like"/>
    <property type="match status" value="1"/>
</dbReference>
<dbReference type="SUPFAM" id="SSF55781">
    <property type="entry name" value="GAF domain-like"/>
    <property type="match status" value="1"/>
</dbReference>
<dbReference type="PROSITE" id="PS50109">
    <property type="entry name" value="HIS_KIN"/>
    <property type="match status" value="1"/>
</dbReference>
<dbReference type="PROSITE" id="PS50110">
    <property type="entry name" value="RESPONSE_REGULATORY"/>
    <property type="match status" value="1"/>
</dbReference>
<reference key="1">
    <citation type="journal article" date="2004" name="J. Exp. Bot.">
        <title>Differential expression of three genes encoding an ethylene receptor in rice during development, and in response to indole-3-acetic acid and silver ions.</title>
        <authorList>
            <person name="Yau C.P."/>
            <person name="Wang L."/>
            <person name="Yu M."/>
            <person name="Zee S.Y."/>
            <person name="Yip W.K."/>
        </authorList>
    </citation>
    <scope>NUCLEOTIDE SEQUENCE [MRNA]</scope>
    <scope>TISSUE SPECIFICITY</scope>
    <scope>INDUCTION BY ETHYLENE</scope>
    <source>
        <strain>cv. IR36</strain>
    </source>
</reference>
<reference key="2">
    <citation type="journal article" date="2004" name="J. Exp. Bot.">
        <title>Cloning of a cDNA encoding an ETR2-like protein (Os-ERL1) from deep water rice (Oryza sativa L.) and increase in its mRNA level by submergence, ethylene, and gibberellin treatments.</title>
        <authorList>
            <person name="Watanabe H."/>
            <person name="Saigusa M."/>
            <person name="Hase S."/>
            <person name="Hayakawa T."/>
            <person name="Satoh S."/>
        </authorList>
    </citation>
    <scope>NUCLEOTIDE SEQUENCE [MRNA]</scope>
    <scope>INDUCTION</scope>
    <source>
        <strain>cv. Pin Gaew 56</strain>
        <tissue>Stem</tissue>
    </source>
</reference>
<reference key="3">
    <citation type="journal article" date="2005" name="PLoS Biol.">
        <title>The genomes of Oryza sativa: a history of duplications.</title>
        <authorList>
            <person name="Yu J."/>
            <person name="Wang J."/>
            <person name="Lin W."/>
            <person name="Li S."/>
            <person name="Li H."/>
            <person name="Zhou J."/>
            <person name="Ni P."/>
            <person name="Dong W."/>
            <person name="Hu S."/>
            <person name="Zeng C."/>
            <person name="Zhang J."/>
            <person name="Zhang Y."/>
            <person name="Li R."/>
            <person name="Xu Z."/>
            <person name="Li S."/>
            <person name="Li X."/>
            <person name="Zheng H."/>
            <person name="Cong L."/>
            <person name="Lin L."/>
            <person name="Yin J."/>
            <person name="Geng J."/>
            <person name="Li G."/>
            <person name="Shi J."/>
            <person name="Liu J."/>
            <person name="Lv H."/>
            <person name="Li J."/>
            <person name="Wang J."/>
            <person name="Deng Y."/>
            <person name="Ran L."/>
            <person name="Shi X."/>
            <person name="Wang X."/>
            <person name="Wu Q."/>
            <person name="Li C."/>
            <person name="Ren X."/>
            <person name="Wang J."/>
            <person name="Wang X."/>
            <person name="Li D."/>
            <person name="Liu D."/>
            <person name="Zhang X."/>
            <person name="Ji Z."/>
            <person name="Zhao W."/>
            <person name="Sun Y."/>
            <person name="Zhang Z."/>
            <person name="Bao J."/>
            <person name="Han Y."/>
            <person name="Dong L."/>
            <person name="Ji J."/>
            <person name="Chen P."/>
            <person name="Wu S."/>
            <person name="Liu J."/>
            <person name="Xiao Y."/>
            <person name="Bu D."/>
            <person name="Tan J."/>
            <person name="Yang L."/>
            <person name="Ye C."/>
            <person name="Zhang J."/>
            <person name="Xu J."/>
            <person name="Zhou Y."/>
            <person name="Yu Y."/>
            <person name="Zhang B."/>
            <person name="Zhuang S."/>
            <person name="Wei H."/>
            <person name="Liu B."/>
            <person name="Lei M."/>
            <person name="Yu H."/>
            <person name="Li Y."/>
            <person name="Xu H."/>
            <person name="Wei S."/>
            <person name="He X."/>
            <person name="Fang L."/>
            <person name="Zhang Z."/>
            <person name="Zhang Y."/>
            <person name="Huang X."/>
            <person name="Su Z."/>
            <person name="Tong W."/>
            <person name="Li J."/>
            <person name="Tong Z."/>
            <person name="Li S."/>
            <person name="Ye J."/>
            <person name="Wang L."/>
            <person name="Fang L."/>
            <person name="Lei T."/>
            <person name="Chen C.-S."/>
            <person name="Chen H.-C."/>
            <person name="Xu Z."/>
            <person name="Li H."/>
            <person name="Huang H."/>
            <person name="Zhang F."/>
            <person name="Xu H."/>
            <person name="Li N."/>
            <person name="Zhao C."/>
            <person name="Li S."/>
            <person name="Dong L."/>
            <person name="Huang Y."/>
            <person name="Li L."/>
            <person name="Xi Y."/>
            <person name="Qi Q."/>
            <person name="Li W."/>
            <person name="Zhang B."/>
            <person name="Hu W."/>
            <person name="Zhang Y."/>
            <person name="Tian X."/>
            <person name="Jiao Y."/>
            <person name="Liang X."/>
            <person name="Jin J."/>
            <person name="Gao L."/>
            <person name="Zheng W."/>
            <person name="Hao B."/>
            <person name="Liu S.-M."/>
            <person name="Wang W."/>
            <person name="Yuan L."/>
            <person name="Cao M."/>
            <person name="McDermott J."/>
            <person name="Samudrala R."/>
            <person name="Wang J."/>
            <person name="Wong G.K.-S."/>
            <person name="Yang H."/>
        </authorList>
    </citation>
    <scope>NUCLEOTIDE SEQUENCE [LARGE SCALE GENOMIC DNA]</scope>
    <source>
        <strain>cv. 93-11</strain>
    </source>
</reference>